<name>EDR1_ARATH</name>
<proteinExistence type="evidence at protein level"/>
<keyword id="KW-0938">Abscisic acid signaling pathway</keyword>
<keyword id="KW-0067">ATP-binding</keyword>
<keyword id="KW-1003">Cell membrane</keyword>
<keyword id="KW-0256">Endoplasmic reticulum</keyword>
<keyword id="KW-0967">Endosome</keyword>
<keyword id="KW-0936">Ethylene signaling pathway</keyword>
<keyword id="KW-0333">Golgi apparatus</keyword>
<keyword id="KW-0418">Kinase</keyword>
<keyword id="KW-0472">Membrane</keyword>
<keyword id="KW-0547">Nucleotide-binding</keyword>
<keyword id="KW-0539">Nucleus</keyword>
<keyword id="KW-0597">Phosphoprotein</keyword>
<keyword id="KW-0611">Plant defense</keyword>
<keyword id="KW-1185">Reference proteome</keyword>
<keyword id="KW-0723">Serine/threonine-protein kinase</keyword>
<keyword id="KW-0808">Transferase</keyword>
<protein>
    <recommendedName>
        <fullName>Serine/threonine-protein kinase EDR1</fullName>
        <ecNumber>2.7.11.1</ecNumber>
    </recommendedName>
    <alternativeName>
        <fullName>MAPKK kinase EDR1</fullName>
    </alternativeName>
    <alternativeName>
        <fullName>Protein ENHANCED DISEASE RESISTANCE 1</fullName>
        <shortName>AtEDR1</shortName>
    </alternativeName>
    <alternativeName>
        <fullName>Serine/threonine/tyrosine-protein kinase 10</fullName>
    </alternativeName>
</protein>
<reference key="1">
    <citation type="journal article" date="2001" name="Proc. Natl. Acad. Sci. U.S.A.">
        <title>Negative regulation of defense responses in plants by a conserved MAPKK kinase.</title>
        <authorList>
            <person name="Frye C.A."/>
            <person name="Tang D."/>
            <person name="Innes R.W."/>
        </authorList>
    </citation>
    <scope>NUCLEOTIDE SEQUENCE [MRNA]</scope>
    <scope>FUNCTION</scope>
    <scope>DISRUPTION PHENOTYPE</scope>
    <source>
        <strain>cv. Columbia</strain>
    </source>
</reference>
<reference key="2">
    <citation type="journal article" date="2009" name="Genetics">
        <title>Arabidopsis thaliana genes encoding defense signaling and recognition proteins exhibit contrasting evolutionary dynamics.</title>
        <authorList>
            <person name="Caldwell K.S."/>
            <person name="Michelmore R.W."/>
        </authorList>
    </citation>
    <scope>NUCLEOTIDE SEQUENCE [GENOMIC DNA]</scope>
</reference>
<reference key="3">
    <citation type="journal article" date="2000" name="Nature">
        <title>Sequence and analysis of chromosome 1 of the plant Arabidopsis thaliana.</title>
        <authorList>
            <person name="Theologis A."/>
            <person name="Ecker J.R."/>
            <person name="Palm C.J."/>
            <person name="Federspiel N.A."/>
            <person name="Kaul S."/>
            <person name="White O."/>
            <person name="Alonso J."/>
            <person name="Altafi H."/>
            <person name="Araujo R."/>
            <person name="Bowman C.L."/>
            <person name="Brooks S.Y."/>
            <person name="Buehler E."/>
            <person name="Chan A."/>
            <person name="Chao Q."/>
            <person name="Chen H."/>
            <person name="Cheuk R.F."/>
            <person name="Chin C.W."/>
            <person name="Chung M.K."/>
            <person name="Conn L."/>
            <person name="Conway A.B."/>
            <person name="Conway A.R."/>
            <person name="Creasy T.H."/>
            <person name="Dewar K."/>
            <person name="Dunn P."/>
            <person name="Etgu P."/>
            <person name="Feldblyum T.V."/>
            <person name="Feng J.-D."/>
            <person name="Fong B."/>
            <person name="Fujii C.Y."/>
            <person name="Gill J.E."/>
            <person name="Goldsmith A.D."/>
            <person name="Haas B."/>
            <person name="Hansen N.F."/>
            <person name="Hughes B."/>
            <person name="Huizar L."/>
            <person name="Hunter J.L."/>
            <person name="Jenkins J."/>
            <person name="Johnson-Hopson C."/>
            <person name="Khan S."/>
            <person name="Khaykin E."/>
            <person name="Kim C.J."/>
            <person name="Koo H.L."/>
            <person name="Kremenetskaia I."/>
            <person name="Kurtz D.B."/>
            <person name="Kwan A."/>
            <person name="Lam B."/>
            <person name="Langin-Hooper S."/>
            <person name="Lee A."/>
            <person name="Lee J.M."/>
            <person name="Lenz C.A."/>
            <person name="Li J.H."/>
            <person name="Li Y.-P."/>
            <person name="Lin X."/>
            <person name="Liu S.X."/>
            <person name="Liu Z.A."/>
            <person name="Luros J.S."/>
            <person name="Maiti R."/>
            <person name="Marziali A."/>
            <person name="Militscher J."/>
            <person name="Miranda M."/>
            <person name="Nguyen M."/>
            <person name="Nierman W.C."/>
            <person name="Osborne B.I."/>
            <person name="Pai G."/>
            <person name="Peterson J."/>
            <person name="Pham P.K."/>
            <person name="Rizzo M."/>
            <person name="Rooney T."/>
            <person name="Rowley D."/>
            <person name="Sakano H."/>
            <person name="Salzberg S.L."/>
            <person name="Schwartz J.R."/>
            <person name="Shinn P."/>
            <person name="Southwick A.M."/>
            <person name="Sun H."/>
            <person name="Tallon L.J."/>
            <person name="Tambunga G."/>
            <person name="Toriumi M.J."/>
            <person name="Town C.D."/>
            <person name="Utterback T."/>
            <person name="Van Aken S."/>
            <person name="Vaysberg M."/>
            <person name="Vysotskaia V.S."/>
            <person name="Walker M."/>
            <person name="Wu D."/>
            <person name="Yu G."/>
            <person name="Fraser C.M."/>
            <person name="Venter J.C."/>
            <person name="Davis R.W."/>
        </authorList>
    </citation>
    <scope>NUCLEOTIDE SEQUENCE [LARGE SCALE GENOMIC DNA]</scope>
    <source>
        <strain>cv. Columbia</strain>
    </source>
</reference>
<reference key="4">
    <citation type="journal article" date="2017" name="Plant J.">
        <title>Araport11: a complete reannotation of the Arabidopsis thaliana reference genome.</title>
        <authorList>
            <person name="Cheng C.Y."/>
            <person name="Krishnakumar V."/>
            <person name="Chan A.P."/>
            <person name="Thibaud-Nissen F."/>
            <person name="Schobel S."/>
            <person name="Town C.D."/>
        </authorList>
    </citation>
    <scope>GENOME REANNOTATION</scope>
    <source>
        <strain>cv. Columbia</strain>
    </source>
</reference>
<reference key="5">
    <citation type="journal article" date="1998" name="Plant Cell">
        <title>An Arabidopsis mutant with enhanced resistance to powdery mildew.</title>
        <authorList>
            <person name="Frye C.A."/>
            <person name="Innes R.W."/>
        </authorList>
    </citation>
    <scope>FUNCTION</scope>
    <scope>DISRUPTION PHENOTYPE</scope>
</reference>
<reference key="6">
    <citation type="journal article" date="2002" name="Plant J.">
        <title>Overexpression of a kinase-deficient form of the EDR1 gene enhances powdery mildew resistance and ethylene-induced senescence in Arabidopsis.</title>
        <authorList>
            <person name="Tang D."/>
            <person name="Innes R.W."/>
        </authorList>
    </citation>
    <scope>FUNCTION</scope>
    <scope>MUTAGENESIS OF LYS-696</scope>
    <scope>CATALYTIC ACTIVITY</scope>
    <scope>AUTOPHOSPHORYLATION</scope>
</reference>
<reference key="7">
    <citation type="journal article" date="2005" name="Plant Physiol.">
        <title>Regulation of plant disease resistance, stress responses, cell death, and ethylene signaling in Arabidopsis by the EDR1 protein kinase.</title>
        <authorList>
            <person name="Tang D."/>
            <person name="Christiansen K.M."/>
            <person name="Innes R.W."/>
        </authorList>
    </citation>
    <scope>FUNCTION</scope>
    <scope>DISRUPTION PHENOTYPE</scope>
</reference>
<reference key="8">
    <citation type="journal article" date="2006" name="Plant Mol. Biol.">
        <title>Genome-wide analysis and experimentation of plant serine/threonine/tyrosine-specific protein kinases.</title>
        <authorList>
            <person name="Rudrabhatla P."/>
            <person name="Reddy M.M."/>
            <person name="Rajasekharan R."/>
        </authorList>
    </citation>
    <scope>GENE FAMILY</scope>
    <scope>NOMENCLATURE</scope>
</reference>
<reference key="9">
    <citation type="journal article" date="2006" name="Proc. Natl. Acad. Sci. U.S.A.">
        <title>Costs and benefits of priming for defense in Arabidopsis.</title>
        <authorList>
            <person name="van Hulten M."/>
            <person name="Pelser M."/>
            <person name="van Loon L.C."/>
            <person name="Pieterse C.M."/>
            <person name="Ton J."/>
        </authorList>
    </citation>
    <scope>FUNCTION IN DEFENSE PRIMING</scope>
    <scope>DISRUPTION PHENOTYPE</scope>
</reference>
<reference key="10">
    <citation type="journal article" date="2008" name="Plant Physiol.">
        <title>Powdery mildew resistance conferred by loss of the ENHANCED DISEASE RESISTANCE1 protein kinase is suppressed by a missense mutation in KEEP ON GOING, a regulator of abscisic acid signaling.</title>
        <authorList>
            <person name="Wawrzynska A."/>
            <person name="Christiansen K.M."/>
            <person name="Lan Y."/>
            <person name="Rodibaugh N.L."/>
            <person name="Innes R.W."/>
        </authorList>
    </citation>
    <scope>FUNCTION</scope>
    <scope>DISRUPTION PHENOTYPE</scope>
</reference>
<reference key="11">
    <citation type="journal article" date="2009" name="Plant Cell">
        <title>Mitogen-activated protein kinases 3 and 6 are required for full priming of stress responses in Arabidopsis thaliana.</title>
        <authorList>
            <person name="Beckers G.J.M."/>
            <person name="Jaskiewicz M."/>
            <person name="Liu Y."/>
            <person name="Underwood W.R."/>
            <person name="He S.Y."/>
            <person name="Zhang S."/>
            <person name="Conrath U."/>
        </authorList>
    </citation>
    <scope>FUNCTION</scope>
    <scope>DISRUPTION PHENOTYPE</scope>
</reference>
<reference key="12">
    <citation type="journal article" date="2011" name="Mol. Plant Pathol.">
        <title>Negative regulation of defence signalling pathways by the EDR1 protein kinase.</title>
        <authorList>
            <person name="Christiansen K.M."/>
            <person name="Gu Y."/>
            <person name="Rodibaugh N."/>
            <person name="Innes R.W."/>
        </authorList>
    </citation>
    <scope>FUNCTION</scope>
    <scope>DISRUPTION PHENOTYPE</scope>
    <scope>SUBCELLULAR LOCATION</scope>
</reference>
<reference key="13">
    <citation type="journal article" date="2011" name="Plant J.">
        <title>Arabidopsis ENHANCED DISEASE RESISTANCE 1 is required for pathogen-induced expression of plant defensins in nonhost resistance, and acts through interference of MYC2-mediated repressor function.</title>
        <authorList>
            <person name="Hiruma K."/>
            <person name="Nishiuchi T."/>
            <person name="Kato T."/>
            <person name="Bednarek P."/>
            <person name="Okuno T."/>
            <person name="Schulze-Lefert P."/>
            <person name="Takano Y."/>
        </authorList>
    </citation>
    <scope>FUNCTION</scope>
    <scope>DISRUPTION PHENOTYPE</scope>
</reference>
<reference key="14">
    <citation type="journal article" date="2011" name="Plant Physiol.">
        <title>The KEEP ON GOING protein of Arabidopsis recruits the ENHANCED DISEASE RESISTANCE1 protein to trans-Golgi network/early endosome vesicles.</title>
        <authorList>
            <person name="Gu Y."/>
            <person name="Innes R.W."/>
        </authorList>
    </citation>
    <scope>FUNCTION</scope>
    <scope>DISRUPTION PHENOTYPE</scope>
    <scope>SUBCELLULAR LOCATION</scope>
    <scope>INTERACTION WITH KEG</scope>
</reference>
<reference key="15">
    <citation type="journal article" date="2011" name="Plant Signal. Behav.">
        <title>Roles of EDR1 in non-host resistance of Arabidopsis.</title>
        <authorList>
            <person name="Hiruma K."/>
            <person name="Takano Y."/>
        </authorList>
    </citation>
    <scope>REVIEW</scope>
</reference>
<reference key="16">
    <citation type="journal article" date="2015" name="Plant Cell">
        <title>ENHANCED DISEASE RESISTANCE4 associates with CLATHRIN HEAVY CHAIN2 and modulates plant immunity by regulating relocation of EDR1 in Arabidopsis.</title>
        <authorList>
            <person name="Wu G."/>
            <person name="Liu S."/>
            <person name="Zhao Y."/>
            <person name="Wang W."/>
            <person name="Kong Z."/>
            <person name="Tang D."/>
        </authorList>
    </citation>
    <scope>INDUCTION BY POWDERY MILDEW</scope>
    <scope>INTERACTION WITH EDR4</scope>
    <scope>SUBCELLULAR LOCATION</scope>
    <source>
        <strain>cv. Columbia</strain>
    </source>
</reference>
<evidence type="ECO:0000255" key="1">
    <source>
        <dbReference type="PROSITE-ProRule" id="PRU00159"/>
    </source>
</evidence>
<evidence type="ECO:0000255" key="2">
    <source>
        <dbReference type="PROSITE-ProRule" id="PRU10027"/>
    </source>
</evidence>
<evidence type="ECO:0000256" key="3">
    <source>
        <dbReference type="SAM" id="MobiDB-lite"/>
    </source>
</evidence>
<evidence type="ECO:0000269" key="4">
    <source>
    </source>
</evidence>
<evidence type="ECO:0000269" key="5">
    <source>
    </source>
</evidence>
<evidence type="ECO:0000269" key="6">
    <source>
    </source>
</evidence>
<evidence type="ECO:0000269" key="7">
    <source>
    </source>
</evidence>
<evidence type="ECO:0000269" key="8">
    <source>
    </source>
</evidence>
<evidence type="ECO:0000269" key="9">
    <source>
    </source>
</evidence>
<evidence type="ECO:0000269" key="10">
    <source>
    </source>
</evidence>
<evidence type="ECO:0000269" key="11">
    <source>
    </source>
</evidence>
<evidence type="ECO:0000269" key="12">
    <source>
    </source>
</evidence>
<evidence type="ECO:0000269" key="13">
    <source>
    </source>
</evidence>
<evidence type="ECO:0000269" key="14">
    <source>
    </source>
</evidence>
<evidence type="ECO:0000305" key="15"/>
<feature type="chain" id="PRO_0000421116" description="Serine/threonine-protein kinase EDR1">
    <location>
        <begin position="1"/>
        <end position="933"/>
    </location>
</feature>
<feature type="domain" description="Protein kinase" evidence="1">
    <location>
        <begin position="669"/>
        <end position="925"/>
    </location>
</feature>
<feature type="region of interest" description="Disordered" evidence="3">
    <location>
        <begin position="1"/>
        <end position="74"/>
    </location>
</feature>
<feature type="region of interest" description="Disordered" evidence="3">
    <location>
        <begin position="342"/>
        <end position="424"/>
    </location>
</feature>
<feature type="region of interest" description="Disordered" evidence="3">
    <location>
        <begin position="527"/>
        <end position="550"/>
    </location>
</feature>
<feature type="region of interest" description="Disordered" evidence="3">
    <location>
        <begin position="604"/>
        <end position="650"/>
    </location>
</feature>
<feature type="compositionally biased region" description="Basic residues" evidence="3">
    <location>
        <begin position="1"/>
        <end position="10"/>
    </location>
</feature>
<feature type="compositionally biased region" description="Polar residues" evidence="3">
    <location>
        <begin position="37"/>
        <end position="48"/>
    </location>
</feature>
<feature type="compositionally biased region" description="Low complexity" evidence="3">
    <location>
        <begin position="53"/>
        <end position="68"/>
    </location>
</feature>
<feature type="compositionally biased region" description="Polar residues" evidence="3">
    <location>
        <begin position="342"/>
        <end position="356"/>
    </location>
</feature>
<feature type="compositionally biased region" description="Low complexity" evidence="3">
    <location>
        <begin position="367"/>
        <end position="378"/>
    </location>
</feature>
<feature type="compositionally biased region" description="Basic and acidic residues" evidence="3">
    <location>
        <begin position="379"/>
        <end position="389"/>
    </location>
</feature>
<feature type="compositionally biased region" description="Low complexity" evidence="3">
    <location>
        <begin position="404"/>
        <end position="413"/>
    </location>
</feature>
<feature type="compositionally biased region" description="Polar residues" evidence="3">
    <location>
        <begin position="533"/>
        <end position="550"/>
    </location>
</feature>
<feature type="compositionally biased region" description="Basic and acidic residues" evidence="3">
    <location>
        <begin position="607"/>
        <end position="621"/>
    </location>
</feature>
<feature type="active site" description="Proton acceptor" evidence="1 2">
    <location>
        <position position="792"/>
    </location>
</feature>
<feature type="binding site" evidence="1">
    <location>
        <begin position="675"/>
        <end position="683"/>
    </location>
    <ligand>
        <name>ATP</name>
        <dbReference type="ChEBI" id="CHEBI:30616"/>
    </ligand>
</feature>
<feature type="binding site" evidence="15">
    <location>
        <position position="696"/>
    </location>
    <ligand>
        <name>ATP</name>
        <dbReference type="ChEBI" id="CHEBI:30616"/>
    </ligand>
</feature>
<feature type="mutagenesis site" description="Loss of kinase activity." evidence="5">
    <original>K</original>
    <variation>M</variation>
    <location>
        <position position="696"/>
    </location>
</feature>
<accession>Q9FPR3</accession>
<accession>Q9FRR5</accession>
<gene>
    <name type="primary">EDR1</name>
    <name type="synonym">STY10</name>
    <name type="ordered locus">At1g08720</name>
    <name type="ORF">F22O13.20</name>
</gene>
<comment type="function">
    <text evidence="4 5 6 7 8 9 10 11 12 14">MAPKKK serine/threonine-protein kinase involved in the regulation of a MAP kinase cascade (probably including MPK3 and MPK6) that negatively regulates salicylic acid- (SA-) dependent defense responses, abscisic acid (ABA) signaling, and ethylene-induced senescence. Also modulates stress response (e.g. drought) signaling and cell death, in an ORE9-dependent manner. Functions at a point of cross talk between ethylene, ABA and SA signaling that impinges on senescence and cell death. On the other hand, it confers sensitivity to various pathogens such as the fungus E.cichoracearum, the oomycete H.parasitica and the bacteria P.syringae pv. tomato DC3000. Required for resistance to some hemibiotrophic/necrotrophic fungal pathogens (e.g. C.gloeosporioides, C.higginsianum and A.brassicicola) through the induction of defensin expression, probably by repressing MYC2, an inhibitor of defensin genes (PDFs). Together with KEG, may regulate endocytic trafficking and/or the formation of signaling complexes on trans-Golgi network (TGN)/ early endosome (EE) vesicles during stress responses.</text>
</comment>
<comment type="catalytic activity">
    <reaction evidence="5">
        <text>L-seryl-[protein] + ATP = O-phospho-L-seryl-[protein] + ADP + H(+)</text>
        <dbReference type="Rhea" id="RHEA:17989"/>
        <dbReference type="Rhea" id="RHEA-COMP:9863"/>
        <dbReference type="Rhea" id="RHEA-COMP:11604"/>
        <dbReference type="ChEBI" id="CHEBI:15378"/>
        <dbReference type="ChEBI" id="CHEBI:29999"/>
        <dbReference type="ChEBI" id="CHEBI:30616"/>
        <dbReference type="ChEBI" id="CHEBI:83421"/>
        <dbReference type="ChEBI" id="CHEBI:456216"/>
        <dbReference type="EC" id="2.7.11.1"/>
    </reaction>
</comment>
<comment type="catalytic activity">
    <reaction evidence="5">
        <text>L-threonyl-[protein] + ATP = O-phospho-L-threonyl-[protein] + ADP + H(+)</text>
        <dbReference type="Rhea" id="RHEA:46608"/>
        <dbReference type="Rhea" id="RHEA-COMP:11060"/>
        <dbReference type="Rhea" id="RHEA-COMP:11605"/>
        <dbReference type="ChEBI" id="CHEBI:15378"/>
        <dbReference type="ChEBI" id="CHEBI:30013"/>
        <dbReference type="ChEBI" id="CHEBI:30616"/>
        <dbReference type="ChEBI" id="CHEBI:61977"/>
        <dbReference type="ChEBI" id="CHEBI:456216"/>
        <dbReference type="EC" id="2.7.11.1"/>
    </reaction>
</comment>
<comment type="subunit">
    <text evidence="10 13">Interacts with KEG (PubMed:21343429). Binds and recruited by EDR4 at the powdery mildew (e.g. G.cichoracearum) penetration site on the plasma membrane (PubMed:25747881).</text>
</comment>
<comment type="subcellular location">
    <subcellularLocation>
        <location evidence="13">Cell membrane</location>
    </subcellularLocation>
    <subcellularLocation>
        <location evidence="13">Endosome</location>
    </subcellularLocation>
    <subcellularLocation>
        <location>Nucleus</location>
    </subcellularLocation>
    <subcellularLocation>
        <location>Endoplasmic reticulum</location>
    </subcellularLocation>
    <subcellularLocation>
        <location>Golgi apparatus</location>
        <location>trans-Golgi network</location>
    </subcellularLocation>
    <subcellularLocation>
        <location>Early endosome</location>
    </subcellularLocation>
    <text evidence="13">Displays dynamic movement in cells with accumulation at the plasma membrane around pathogenic fungus penetration site (PubMed:25747881). Excluded from the nucleolus. Targeted to trans-Golgi network and early endosome vesicles via interaction with KEG.</text>
</comment>
<comment type="induction">
    <text evidence="13">Accumulates at the penetration site of powdery mildew (e.g. G.cichoracearum) infection.</text>
</comment>
<comment type="PTM">
    <text>Autophosphorylated.</text>
</comment>
<comment type="disruption phenotype">
    <text evidence="4 6 7 8 9 10 11 12 14">Hypersensitivity to abscisic acid (ABA). Confers defense priming against pathogens and stresses such as E.cichoracearum, H.parasitica and P.syringae pv. tomato DC3000. This enhanced resistance is associated with a faster induction of several defense responses, including callose deposition and host cell death, in a salicylic acid- (SA-) dependent manner, as well as a strong elicitation of stress-induced MPK3 and MPK6 activity. Enhanced stress responses and spontaneous necrotic lesions under drought conditions. In contrast, reduced resistance to the non-adapted hemibiotrophic C.gloeosporioides and higher susceptibility to the host-adapted pathogens C.higginsianum and necrotrophic A.brassicicola. These phenotypes are rescued by disruption of KEG.</text>
</comment>
<comment type="similarity">
    <text evidence="15">Belongs to the protein kinase superfamily. TKL Ser/Thr protein kinase family. RAF subfamily.</text>
</comment>
<comment type="sequence caution" evidence="15">
    <conflict type="erroneous gene model prediction">
        <sequence resource="EMBL-CDS" id="AAF99762"/>
    </conflict>
    <text>The predicted gene has been split into 2 genes: At1g08720 and At1g08730.</text>
</comment>
<dbReference type="EC" id="2.7.11.1"/>
<dbReference type="EMBL" id="AF305913">
    <property type="protein sequence ID" value="AAG31143.1"/>
    <property type="molecule type" value="mRNA"/>
</dbReference>
<dbReference type="EMBL" id="EF470626">
    <property type="protein sequence ID" value="ABR45962.1"/>
    <property type="molecule type" value="Genomic_DNA"/>
</dbReference>
<dbReference type="EMBL" id="EF470630">
    <property type="protein sequence ID" value="ABR45966.1"/>
    <property type="molecule type" value="Genomic_DNA"/>
</dbReference>
<dbReference type="EMBL" id="EF470631">
    <property type="protein sequence ID" value="ABR45967.1"/>
    <property type="molecule type" value="Genomic_DNA"/>
</dbReference>
<dbReference type="EMBL" id="EF470634">
    <property type="protein sequence ID" value="ABR45970.1"/>
    <property type="molecule type" value="Genomic_DNA"/>
</dbReference>
<dbReference type="EMBL" id="EF470643">
    <property type="protein sequence ID" value="ABR45979.1"/>
    <property type="molecule type" value="Genomic_DNA"/>
</dbReference>
<dbReference type="EMBL" id="EF470645">
    <property type="protein sequence ID" value="ABR45981.1"/>
    <property type="molecule type" value="Genomic_DNA"/>
</dbReference>
<dbReference type="EMBL" id="AC003981">
    <property type="protein sequence ID" value="AAF99762.1"/>
    <property type="status" value="ALT_SEQ"/>
    <property type="molecule type" value="Genomic_DNA"/>
</dbReference>
<dbReference type="EMBL" id="CP002684">
    <property type="protein sequence ID" value="AEE28339.1"/>
    <property type="molecule type" value="Genomic_DNA"/>
</dbReference>
<dbReference type="PIR" id="T00726">
    <property type="entry name" value="T00726"/>
</dbReference>
<dbReference type="RefSeq" id="NP_563824.1">
    <property type="nucleotide sequence ID" value="NM_100745.2"/>
</dbReference>
<dbReference type="SMR" id="Q9FPR3"/>
<dbReference type="BioGRID" id="22634">
    <property type="interactions" value="3"/>
</dbReference>
<dbReference type="FunCoup" id="Q9FPR3">
    <property type="interactions" value="948"/>
</dbReference>
<dbReference type="STRING" id="3702.Q9FPR3"/>
<dbReference type="GlyGen" id="Q9FPR3">
    <property type="glycosylation" value="3 sites"/>
</dbReference>
<dbReference type="iPTMnet" id="Q9FPR3"/>
<dbReference type="PaxDb" id="3702-AT1G08720.1"/>
<dbReference type="ProteomicsDB" id="247072"/>
<dbReference type="EnsemblPlants" id="AT1G08720.1">
    <property type="protein sequence ID" value="AT1G08720.1"/>
    <property type="gene ID" value="AT1G08720"/>
</dbReference>
<dbReference type="GeneID" id="837393"/>
<dbReference type="Gramene" id="AT1G08720.1">
    <property type="protein sequence ID" value="AT1G08720.1"/>
    <property type="gene ID" value="AT1G08720"/>
</dbReference>
<dbReference type="KEGG" id="ath:AT1G08720"/>
<dbReference type="Araport" id="AT1G08720"/>
<dbReference type="TAIR" id="AT1G08720">
    <property type="gene designation" value="EDR1"/>
</dbReference>
<dbReference type="eggNOG" id="KOG0192">
    <property type="taxonomic scope" value="Eukaryota"/>
</dbReference>
<dbReference type="HOGENOM" id="CLU_006806_0_0_1"/>
<dbReference type="InParanoid" id="Q9FPR3"/>
<dbReference type="OMA" id="PFQIKGP"/>
<dbReference type="PhylomeDB" id="Q9FPR3"/>
<dbReference type="PRO" id="PR:Q9FPR3"/>
<dbReference type="Proteomes" id="UP000006548">
    <property type="component" value="Chromosome 1"/>
</dbReference>
<dbReference type="ExpressionAtlas" id="Q9FPR3">
    <property type="expression patterns" value="baseline and differential"/>
</dbReference>
<dbReference type="GO" id="GO:0005829">
    <property type="term" value="C:cytosol"/>
    <property type="evidence" value="ECO:0000314"/>
    <property type="project" value="TAIR"/>
</dbReference>
<dbReference type="GO" id="GO:0005769">
    <property type="term" value="C:early endosome"/>
    <property type="evidence" value="ECO:0000314"/>
    <property type="project" value="TAIR"/>
</dbReference>
<dbReference type="GO" id="GO:0005783">
    <property type="term" value="C:endoplasmic reticulum"/>
    <property type="evidence" value="ECO:0000314"/>
    <property type="project" value="UniProtKB"/>
</dbReference>
<dbReference type="GO" id="GO:0005768">
    <property type="term" value="C:endosome"/>
    <property type="evidence" value="ECO:0000314"/>
    <property type="project" value="UniProtKB"/>
</dbReference>
<dbReference type="GO" id="GO:0005634">
    <property type="term" value="C:nucleus"/>
    <property type="evidence" value="ECO:0000314"/>
    <property type="project" value="UniProtKB"/>
</dbReference>
<dbReference type="GO" id="GO:0005886">
    <property type="term" value="C:plasma membrane"/>
    <property type="evidence" value="ECO:0000314"/>
    <property type="project" value="UniProtKB"/>
</dbReference>
<dbReference type="GO" id="GO:0005802">
    <property type="term" value="C:trans-Golgi network"/>
    <property type="evidence" value="ECO:0000314"/>
    <property type="project" value="TAIR"/>
</dbReference>
<dbReference type="GO" id="GO:0012510">
    <property type="term" value="C:trans-Golgi network transport vesicle membrane"/>
    <property type="evidence" value="ECO:0000314"/>
    <property type="project" value="TAIR"/>
</dbReference>
<dbReference type="GO" id="GO:0005524">
    <property type="term" value="F:ATP binding"/>
    <property type="evidence" value="ECO:0007669"/>
    <property type="project" value="UniProtKB-KW"/>
</dbReference>
<dbReference type="GO" id="GO:0016301">
    <property type="term" value="F:kinase activity"/>
    <property type="evidence" value="ECO:0000314"/>
    <property type="project" value="TAIR"/>
</dbReference>
<dbReference type="GO" id="GO:0004709">
    <property type="term" value="F:MAP kinase kinase kinase activity"/>
    <property type="evidence" value="ECO:0000315"/>
    <property type="project" value="TAIR"/>
</dbReference>
<dbReference type="GO" id="GO:0106310">
    <property type="term" value="F:protein serine kinase activity"/>
    <property type="evidence" value="ECO:0007669"/>
    <property type="project" value="RHEA"/>
</dbReference>
<dbReference type="GO" id="GO:0004712">
    <property type="term" value="F:protein serine/threonine/tyrosine kinase activity"/>
    <property type="evidence" value="ECO:0000250"/>
    <property type="project" value="TAIR"/>
</dbReference>
<dbReference type="GO" id="GO:0009738">
    <property type="term" value="P:abscisic acid-activated signaling pathway"/>
    <property type="evidence" value="ECO:0007669"/>
    <property type="project" value="UniProtKB-KW"/>
</dbReference>
<dbReference type="GO" id="GO:0008219">
    <property type="term" value="P:cell death"/>
    <property type="evidence" value="ECO:0000315"/>
    <property type="project" value="TAIR"/>
</dbReference>
<dbReference type="GO" id="GO:0002229">
    <property type="term" value="P:defense response to oomycetes"/>
    <property type="evidence" value="ECO:0000315"/>
    <property type="project" value="UniProtKB"/>
</dbReference>
<dbReference type="GO" id="GO:0009873">
    <property type="term" value="P:ethylene-activated signaling pathway"/>
    <property type="evidence" value="ECO:0007669"/>
    <property type="project" value="UniProtKB-KW"/>
</dbReference>
<dbReference type="GO" id="GO:0000165">
    <property type="term" value="P:MAPK cascade"/>
    <property type="evidence" value="ECO:0000250"/>
    <property type="project" value="TAIR"/>
</dbReference>
<dbReference type="GO" id="GO:0009788">
    <property type="term" value="P:negative regulation of abscisic acid-activated signaling pathway"/>
    <property type="evidence" value="ECO:0000315"/>
    <property type="project" value="UniProtKB"/>
</dbReference>
<dbReference type="GO" id="GO:0046777">
    <property type="term" value="P:protein autophosphorylation"/>
    <property type="evidence" value="ECO:0000314"/>
    <property type="project" value="TAIR"/>
</dbReference>
<dbReference type="GO" id="GO:1900424">
    <property type="term" value="P:regulation of defense response to bacterium"/>
    <property type="evidence" value="ECO:0000315"/>
    <property type="project" value="UniProtKB"/>
</dbReference>
<dbReference type="GO" id="GO:1900150">
    <property type="term" value="P:regulation of defense response to fungus"/>
    <property type="evidence" value="ECO:0000315"/>
    <property type="project" value="UniProtKB"/>
</dbReference>
<dbReference type="GO" id="GO:2000031">
    <property type="term" value="P:regulation of salicylic acid mediated signaling pathway"/>
    <property type="evidence" value="ECO:0000315"/>
    <property type="project" value="UniProtKB"/>
</dbReference>
<dbReference type="GO" id="GO:0009617">
    <property type="term" value="P:response to bacterium"/>
    <property type="evidence" value="ECO:0000315"/>
    <property type="project" value="TAIR"/>
</dbReference>
<dbReference type="GO" id="GO:0009723">
    <property type="term" value="P:response to ethylene"/>
    <property type="evidence" value="ECO:0000315"/>
    <property type="project" value="TAIR"/>
</dbReference>
<dbReference type="GO" id="GO:0009620">
    <property type="term" value="P:response to fungus"/>
    <property type="evidence" value="ECO:0000315"/>
    <property type="project" value="TAIR"/>
</dbReference>
<dbReference type="GO" id="GO:0009414">
    <property type="term" value="P:response to water deprivation"/>
    <property type="evidence" value="ECO:0000315"/>
    <property type="project" value="TAIR"/>
</dbReference>
<dbReference type="CDD" id="cd13999">
    <property type="entry name" value="STKc_MAP3K-like"/>
    <property type="match status" value="1"/>
</dbReference>
<dbReference type="FunFam" id="1.10.510.10:FF:000476">
    <property type="entry name" value="PAS domain-containing protein tyrosine kinase family protein"/>
    <property type="match status" value="1"/>
</dbReference>
<dbReference type="FunFam" id="3.30.200.20:FF:000060">
    <property type="entry name" value="Serine/threonine-protein kinase isoform 1"/>
    <property type="match status" value="1"/>
</dbReference>
<dbReference type="Gene3D" id="3.30.200.20">
    <property type="entry name" value="Phosphorylase Kinase, domain 1"/>
    <property type="match status" value="1"/>
</dbReference>
<dbReference type="Gene3D" id="1.10.510.10">
    <property type="entry name" value="Transferase(Phosphotransferase) domain 1"/>
    <property type="match status" value="1"/>
</dbReference>
<dbReference type="InterPro" id="IPR055164">
    <property type="entry name" value="EDR1/CTR1/ARMC3-like_pept-like"/>
</dbReference>
<dbReference type="InterPro" id="IPR011009">
    <property type="entry name" value="Kinase-like_dom_sf"/>
</dbReference>
<dbReference type="InterPro" id="IPR000719">
    <property type="entry name" value="Prot_kinase_dom"/>
</dbReference>
<dbReference type="InterPro" id="IPR017441">
    <property type="entry name" value="Protein_kinase_ATP_BS"/>
</dbReference>
<dbReference type="InterPro" id="IPR001245">
    <property type="entry name" value="Ser-Thr/Tyr_kinase_cat_dom"/>
</dbReference>
<dbReference type="InterPro" id="IPR008271">
    <property type="entry name" value="Ser/Thr_kinase_AS"/>
</dbReference>
<dbReference type="InterPro" id="IPR050167">
    <property type="entry name" value="Ser_Thr_protein_kinase"/>
</dbReference>
<dbReference type="PANTHER" id="PTHR23257">
    <property type="entry name" value="SERINE-THREONINE PROTEIN KINASE"/>
    <property type="match status" value="1"/>
</dbReference>
<dbReference type="PANTHER" id="PTHR23257:SF813">
    <property type="entry name" value="SERINE_THREONINE-PROTEIN KINASE EDR1"/>
    <property type="match status" value="1"/>
</dbReference>
<dbReference type="Pfam" id="PF14381">
    <property type="entry name" value="EDR1_CTR1_ARMC3_pept"/>
    <property type="match status" value="1"/>
</dbReference>
<dbReference type="Pfam" id="PF07714">
    <property type="entry name" value="PK_Tyr_Ser-Thr"/>
    <property type="match status" value="1"/>
</dbReference>
<dbReference type="PRINTS" id="PR00109">
    <property type="entry name" value="TYRKINASE"/>
</dbReference>
<dbReference type="SMART" id="SM00220">
    <property type="entry name" value="S_TKc"/>
    <property type="match status" value="1"/>
</dbReference>
<dbReference type="SUPFAM" id="SSF56112">
    <property type="entry name" value="Protein kinase-like (PK-like)"/>
    <property type="match status" value="1"/>
</dbReference>
<dbReference type="PROSITE" id="PS00107">
    <property type="entry name" value="PROTEIN_KINASE_ATP"/>
    <property type="match status" value="1"/>
</dbReference>
<dbReference type="PROSITE" id="PS50011">
    <property type="entry name" value="PROTEIN_KINASE_DOM"/>
    <property type="match status" value="1"/>
</dbReference>
<dbReference type="PROSITE" id="PS00108">
    <property type="entry name" value="PROTEIN_KINASE_ST"/>
    <property type="match status" value="1"/>
</dbReference>
<sequence>MKHIFKKLHRGGNQEQQNRTNDAAPPSDQNRIHVSANPPQATPSSVTETLPVAGATSSMASPAPTAASNRADYMSSEEEYQVQLALAISASNSQSSEDPEKHQIRAATLLSLGSHQRMDSRRDSSEVVAQRLSRQYWEYGVLDYEEKVVDSFYDVYSLSTDSAKQGEMPSLEDLESNHGTPGFEAVVVNRPIDSSLHELLEIAECIALGCSTTSVSVLVQRLAELVTEHMGGSAEDSSIVLARWTEKSSEFKAALNTCVFPIGFVKIGISRHRALLFKVLADSVRLPCRLVKGSHYTGNEDDAVNTIRLEDEREYLVDLMTDPGTLIPADFASASNNTVEPCNSNGNKFPTAQFSNDVPKLSEGEGSSHSSMANYSSSLDRRTEAERTDSSYPKVGPLRNIDYSSPSSVTSSTQLENNSSTAIGKGSRGAIIECSRTNMNIVPYNQNSEEDPKNLFADLNPFQNKGADKLYMPTKSGLNNVDDFHQQKNNPLVGRSPAPMMWKNYSCNEAPKRKENSYIENLLPKLHRDPRYGNTQSSYATSSSNGAISSNVHGRDNVTFVSPVAVPSSFTSTENQFRPSIVEDMNRNTNNELDLQPHTAAVVHGQQNDESHIHDHRKYTSDDISTGCDPRLKDHESTSSSLDSTSYRNDPQVLDDADVGECEIPWNDLVIAERIGLGSYGEVYHADWHGTEVAVKKFLDQDFSGAALAEFRSEVRIMRRLRHPNVVFFLGAVTRPPNLSIVTEFLPRGSLYRILHRPKSHIDERRRIKMALDVAMGMNCLHTSTPTIVHRDLKTPNLLVDNNWNVKVGDFGLSRLKHNTFLSSKSTAGTPEWMAPEVLRNEPSNEKCDVYSFGVILWELATLRLPWRGMNPMQVVGAVGFQNRRLEIPKELDPVVGRIILECWQTDPNLRPSFAQLTEVLKPLNRLVLPTPQ</sequence>
<organism>
    <name type="scientific">Arabidopsis thaliana</name>
    <name type="common">Mouse-ear cress</name>
    <dbReference type="NCBI Taxonomy" id="3702"/>
    <lineage>
        <taxon>Eukaryota</taxon>
        <taxon>Viridiplantae</taxon>
        <taxon>Streptophyta</taxon>
        <taxon>Embryophyta</taxon>
        <taxon>Tracheophyta</taxon>
        <taxon>Spermatophyta</taxon>
        <taxon>Magnoliopsida</taxon>
        <taxon>eudicotyledons</taxon>
        <taxon>Gunneridae</taxon>
        <taxon>Pentapetalae</taxon>
        <taxon>rosids</taxon>
        <taxon>malvids</taxon>
        <taxon>Brassicales</taxon>
        <taxon>Brassicaceae</taxon>
        <taxon>Camelineae</taxon>
        <taxon>Arabidopsis</taxon>
    </lineage>
</organism>